<name>SOK5_ARATH</name>
<feature type="chain" id="PRO_0000452144" description="Protein SOSEKI 5">
    <location>
        <begin position="1"/>
        <end position="423"/>
    </location>
</feature>
<feature type="region of interest" description="Disordered" evidence="2">
    <location>
        <begin position="1"/>
        <end position="33"/>
    </location>
</feature>
<feature type="region of interest" description="DIX-like oligomerization domain" evidence="1">
    <location>
        <begin position="45"/>
        <end position="136"/>
    </location>
</feature>
<feature type="region of interest" description="Disordered" evidence="2">
    <location>
        <begin position="150"/>
        <end position="172"/>
    </location>
</feature>
<feature type="region of interest" description="Disordered" evidence="2">
    <location>
        <begin position="196"/>
        <end position="258"/>
    </location>
</feature>
<feature type="region of interest" description="Disordered" evidence="2">
    <location>
        <begin position="379"/>
        <end position="423"/>
    </location>
</feature>
<feature type="short sequence motif" description="Association to cell membranes" evidence="4">
    <location>
        <begin position="233"/>
        <end position="234"/>
    </location>
</feature>
<feature type="short sequence motif" description="Association to cell membranes" evidence="1">
    <location>
        <begin position="303"/>
        <end position="304"/>
    </location>
</feature>
<feature type="compositionally biased region" description="Basic and acidic residues" evidence="2">
    <location>
        <begin position="19"/>
        <end position="33"/>
    </location>
</feature>
<feature type="compositionally biased region" description="Polar residues" evidence="2">
    <location>
        <begin position="196"/>
        <end position="211"/>
    </location>
</feature>
<feature type="compositionally biased region" description="Basic residues" evidence="2">
    <location>
        <begin position="406"/>
        <end position="415"/>
    </location>
</feature>
<feature type="mutagenesis site" description="Delocalization from cell membranes." evidence="4">
    <original>C</original>
    <variation>A</variation>
    <location>
        <position position="303"/>
    </location>
</feature>
<feature type="mutagenesis site" description="No detectable changes in localization or biological activity." evidence="4">
    <original>EDKE</original>
    <variation>QDKQ</variation>
    <location>
        <begin position="356"/>
        <end position="359"/>
    </location>
</feature>
<organism>
    <name type="scientific">Arabidopsis thaliana</name>
    <name type="common">Mouse-ear cress</name>
    <dbReference type="NCBI Taxonomy" id="3702"/>
    <lineage>
        <taxon>Eukaryota</taxon>
        <taxon>Viridiplantae</taxon>
        <taxon>Streptophyta</taxon>
        <taxon>Embryophyta</taxon>
        <taxon>Tracheophyta</taxon>
        <taxon>Spermatophyta</taxon>
        <taxon>Magnoliopsida</taxon>
        <taxon>eudicotyledons</taxon>
        <taxon>Gunneridae</taxon>
        <taxon>Pentapetalae</taxon>
        <taxon>rosids</taxon>
        <taxon>malvids</taxon>
        <taxon>Brassicales</taxon>
        <taxon>Brassicaceae</taxon>
        <taxon>Camelineae</taxon>
        <taxon>Arabidopsis</taxon>
    </lineage>
</organism>
<proteinExistence type="evidence at protein level"/>
<evidence type="ECO:0000250" key="1">
    <source>
        <dbReference type="UniProtKB" id="Q9SYJ8"/>
    </source>
</evidence>
<evidence type="ECO:0000256" key="2">
    <source>
        <dbReference type="SAM" id="MobiDB-lite"/>
    </source>
</evidence>
<evidence type="ECO:0000269" key="3">
    <source>
    </source>
</evidence>
<evidence type="ECO:0000269" key="4">
    <source>
    </source>
</evidence>
<evidence type="ECO:0000303" key="5">
    <source>
    </source>
</evidence>
<evidence type="ECO:0000303" key="6">
    <source>
    </source>
</evidence>
<evidence type="ECO:0000305" key="7"/>
<evidence type="ECO:0000305" key="8">
    <source>
    </source>
</evidence>
<evidence type="ECO:0000312" key="9">
    <source>
        <dbReference type="Araport" id="AT5G59790"/>
    </source>
</evidence>
<evidence type="ECO:0000312" key="10">
    <source>
        <dbReference type="EMBL" id="BAB08346.1"/>
    </source>
</evidence>
<comment type="function">
    <text evidence="3">SOSEKI proteins (SOK1-5) locally interpret global polarity cues and can influence cell division orientation to coordinate cell polarization relative to body axes.</text>
</comment>
<comment type="subunit">
    <text evidence="1 4 8">Homodimer (By similarity). Forms long polymer filaments with other SOKs proteins polymers (e.g. SOK1, SOK2, SOK3 and SOK4) crucial for polar localization and biological activity (PubMed:32004461). Binds to ANGUSTIFOLIA (AN) (Probable).</text>
</comment>
<comment type="subcellular location">
    <subcellularLocation>
        <location evidence="3">Cell membrane</location>
        <topology evidence="3">Peripheral membrane protein</topology>
        <orientation evidence="3">Cytoplasmic side</orientation>
    </subcellularLocation>
    <text evidence="3">SOSEKI proteins integrate apical-basal and radial organismal axes to localize to polar cell edges.</text>
</comment>
<comment type="tissue specificity">
    <text evidence="3">Expressed during embryogenesis and in roots.</text>
</comment>
<comment type="developmental stage">
    <text evidence="3">During embryogenesis, first observed at the globular stage and accumulates in cells next to the suspensor, including lens-shaped cells (PubMed:30737509). Expressed in the inner basal edge of endodermal cells in the primary and lateral roots (PubMed:30737509).</text>
</comment>
<comment type="domain">
    <text evidence="1">The DIX-like oligomerization domain is required for polymerization, edge localization and biological activity.</text>
</comment>
<comment type="miscellaneous">
    <text evidence="5">'Soseki' means cornerstone in Japanese.</text>
</comment>
<comment type="similarity">
    <text evidence="7">Belongs to the SOSEKI family.</text>
</comment>
<protein>
    <recommendedName>
        <fullName evidence="5">Protein SOSEKI 5</fullName>
        <shortName evidence="6">AtSOK5</shortName>
    </recommendedName>
</protein>
<accession>Q9FJF5</accession>
<keyword id="KW-0131">Cell cycle</keyword>
<keyword id="KW-0132">Cell division</keyword>
<keyword id="KW-1003">Cell membrane</keyword>
<keyword id="KW-0217">Developmental protein</keyword>
<keyword id="KW-0472">Membrane</keyword>
<keyword id="KW-1185">Reference proteome</keyword>
<dbReference type="EMBL" id="AB015475">
    <property type="protein sequence ID" value="BAB08346.1"/>
    <property type="molecule type" value="Genomic_DNA"/>
</dbReference>
<dbReference type="EMBL" id="CP002688">
    <property type="protein sequence ID" value="AED97234.1"/>
    <property type="molecule type" value="Genomic_DNA"/>
</dbReference>
<dbReference type="EMBL" id="AY093139">
    <property type="protein sequence ID" value="AAM13138.1"/>
    <property type="molecule type" value="mRNA"/>
</dbReference>
<dbReference type="EMBL" id="BT008516">
    <property type="protein sequence ID" value="AAP37875.1"/>
    <property type="molecule type" value="mRNA"/>
</dbReference>
<dbReference type="EMBL" id="AK226458">
    <property type="protein sequence ID" value="BAE98600.1"/>
    <property type="molecule type" value="mRNA"/>
</dbReference>
<dbReference type="RefSeq" id="NP_200787.1">
    <property type="nucleotide sequence ID" value="NM_125371.6"/>
</dbReference>
<dbReference type="SMR" id="Q9FJF5"/>
<dbReference type="FunCoup" id="Q9FJF5">
    <property type="interactions" value="735"/>
</dbReference>
<dbReference type="IntAct" id="Q9FJF5">
    <property type="interactions" value="2"/>
</dbReference>
<dbReference type="STRING" id="3702.Q9FJF5"/>
<dbReference type="iPTMnet" id="Q9FJF5"/>
<dbReference type="PaxDb" id="3702-AT5G59790.1"/>
<dbReference type="ProteomicsDB" id="190006"/>
<dbReference type="EnsemblPlants" id="AT5G59790.1">
    <property type="protein sequence ID" value="AT5G59790.1"/>
    <property type="gene ID" value="AT5G59790"/>
</dbReference>
<dbReference type="GeneID" id="836100"/>
<dbReference type="Gramene" id="AT5G59790.1">
    <property type="protein sequence ID" value="AT5G59790.1"/>
    <property type="gene ID" value="AT5G59790"/>
</dbReference>
<dbReference type="KEGG" id="ath:AT5G59790"/>
<dbReference type="Araport" id="AT5G59790"/>
<dbReference type="TAIR" id="AT5G59790">
    <property type="gene designation" value="SOK5"/>
</dbReference>
<dbReference type="eggNOG" id="ENOG502QUB8">
    <property type="taxonomic scope" value="Eukaryota"/>
</dbReference>
<dbReference type="HOGENOM" id="CLU_025038_0_0_1"/>
<dbReference type="InParanoid" id="Q9FJF5"/>
<dbReference type="OMA" id="CQAGNEN"/>
<dbReference type="PhylomeDB" id="Q9FJF5"/>
<dbReference type="PRO" id="PR:Q9FJF5"/>
<dbReference type="Proteomes" id="UP000006548">
    <property type="component" value="Chromosome 5"/>
</dbReference>
<dbReference type="ExpressionAtlas" id="Q9FJF5">
    <property type="expression patterns" value="baseline and differential"/>
</dbReference>
<dbReference type="GO" id="GO:0005886">
    <property type="term" value="C:plasma membrane"/>
    <property type="evidence" value="ECO:0007669"/>
    <property type="project" value="UniProtKB-SubCell"/>
</dbReference>
<dbReference type="GO" id="GO:0042803">
    <property type="term" value="F:protein homodimerization activity"/>
    <property type="evidence" value="ECO:0000250"/>
    <property type="project" value="UniProtKB"/>
</dbReference>
<dbReference type="GO" id="GO:0051301">
    <property type="term" value="P:cell division"/>
    <property type="evidence" value="ECO:0007669"/>
    <property type="project" value="UniProtKB-KW"/>
</dbReference>
<dbReference type="GO" id="GO:1905392">
    <property type="term" value="P:plant organ morphogenesis"/>
    <property type="evidence" value="ECO:0000315"/>
    <property type="project" value="UniProtKB"/>
</dbReference>
<dbReference type="GO" id="GO:0051258">
    <property type="term" value="P:protein polymerization"/>
    <property type="evidence" value="ECO:0000314"/>
    <property type="project" value="UniProtKB"/>
</dbReference>
<dbReference type="GO" id="GO:0051302">
    <property type="term" value="P:regulation of cell division"/>
    <property type="evidence" value="ECO:0000315"/>
    <property type="project" value="UniProtKB"/>
</dbReference>
<dbReference type="GO" id="GO:2000067">
    <property type="term" value="P:regulation of root morphogenesis"/>
    <property type="evidence" value="ECO:0000315"/>
    <property type="project" value="UniProtKB"/>
</dbReference>
<dbReference type="GO" id="GO:0090708">
    <property type="term" value="P:specification of plant organ axis polarity"/>
    <property type="evidence" value="ECO:0000315"/>
    <property type="project" value="UniProtKB"/>
</dbReference>
<dbReference type="InterPro" id="IPR010369">
    <property type="entry name" value="SOK"/>
</dbReference>
<dbReference type="InterPro" id="IPR048351">
    <property type="entry name" value="SOK_DIX"/>
</dbReference>
<dbReference type="InterPro" id="IPR021182">
    <property type="entry name" value="SOK_magnoliopsida"/>
</dbReference>
<dbReference type="PANTHER" id="PTHR31083:SF4">
    <property type="entry name" value="PROTEIN SOSEKI 4-RELATED"/>
    <property type="match status" value="1"/>
</dbReference>
<dbReference type="PANTHER" id="PTHR31083">
    <property type="entry name" value="UPSTREAM OF FLC PROTEIN (DUF966)"/>
    <property type="match status" value="1"/>
</dbReference>
<dbReference type="Pfam" id="PF06136">
    <property type="entry name" value="SOK"/>
    <property type="match status" value="1"/>
</dbReference>
<dbReference type="PIRSF" id="PIRSF031043">
    <property type="entry name" value="UCP031043"/>
    <property type="match status" value="1"/>
</dbReference>
<gene>
    <name evidence="5" type="primary">SOK5</name>
    <name evidence="9" type="ordered locus">At5g59790</name>
    <name evidence="10" type="ORF">MMN10.1</name>
</gene>
<sequence>MSSRVFRATPDNNYLVPRRSKDQQDTSPDRNRIWSEPRLKPVVNRKVPVVYYLCRNGQLDHPHFIEVTLSSHDGLYLKDVINRLNDLRGKGMASLYSWSSKRSYKNGFVWHDLSEDDFIFPVQGQEYVLKGSEVLDSCLISNPRSLLETSSFRDPRSLNPDKNSGDDIPAVINRRRNQSWSSIDLSEYKVYKATESSAESTQRLAADASTQTDDRRRRRRPAKEEIEEVKSPASYENQSTELSRDEISPPPSDSSPETLENLIKADGRLILRPSESSTDHRTVESLSSGRMRASAVLMQLISCGTMSFKECGPVLLKDQGLALNGRSGCTITRGAEDNGEERVDKELKSFGRVQLEDKEYFSGSLIETKKELVPALKRSSSYNADRCSRMGPTTEKDEEEAVRAKCIPRKPKPVAKRNNGGQQ</sequence>
<reference key="1">
    <citation type="journal article" date="1998" name="DNA Res.">
        <title>Structural analysis of Arabidopsis thaliana chromosome 5. VII. Sequence features of the regions of 1,013,767 bp covered by sixteen physically assigned P1 and TAC clones.</title>
        <authorList>
            <person name="Nakamura Y."/>
            <person name="Sato S."/>
            <person name="Asamizu E."/>
            <person name="Kaneko T."/>
            <person name="Kotani H."/>
            <person name="Miyajima N."/>
            <person name="Tabata S."/>
        </authorList>
    </citation>
    <scope>NUCLEOTIDE SEQUENCE [LARGE SCALE GENOMIC DNA]</scope>
    <source>
        <strain>cv. Columbia</strain>
    </source>
</reference>
<reference key="2">
    <citation type="journal article" date="2017" name="Plant J.">
        <title>Araport11: a complete reannotation of the Arabidopsis thaliana reference genome.</title>
        <authorList>
            <person name="Cheng C.Y."/>
            <person name="Krishnakumar V."/>
            <person name="Chan A.P."/>
            <person name="Thibaud-Nissen F."/>
            <person name="Schobel S."/>
            <person name="Town C.D."/>
        </authorList>
    </citation>
    <scope>GENOME REANNOTATION</scope>
    <source>
        <strain>cv. Columbia</strain>
    </source>
</reference>
<reference key="3">
    <citation type="journal article" date="2003" name="Science">
        <title>Empirical analysis of transcriptional activity in the Arabidopsis genome.</title>
        <authorList>
            <person name="Yamada K."/>
            <person name="Lim J."/>
            <person name="Dale J.M."/>
            <person name="Chen H."/>
            <person name="Shinn P."/>
            <person name="Palm C.J."/>
            <person name="Southwick A.M."/>
            <person name="Wu H.C."/>
            <person name="Kim C.J."/>
            <person name="Nguyen M."/>
            <person name="Pham P.K."/>
            <person name="Cheuk R.F."/>
            <person name="Karlin-Newmann G."/>
            <person name="Liu S.X."/>
            <person name="Lam B."/>
            <person name="Sakano H."/>
            <person name="Wu T."/>
            <person name="Yu G."/>
            <person name="Miranda M."/>
            <person name="Quach H.L."/>
            <person name="Tripp M."/>
            <person name="Chang C.H."/>
            <person name="Lee J.M."/>
            <person name="Toriumi M.J."/>
            <person name="Chan M.M."/>
            <person name="Tang C.C."/>
            <person name="Onodera C.S."/>
            <person name="Deng J.M."/>
            <person name="Akiyama K."/>
            <person name="Ansari Y."/>
            <person name="Arakawa T."/>
            <person name="Banh J."/>
            <person name="Banno F."/>
            <person name="Bowser L."/>
            <person name="Brooks S.Y."/>
            <person name="Carninci P."/>
            <person name="Chao Q."/>
            <person name="Choy N."/>
            <person name="Enju A."/>
            <person name="Goldsmith A.D."/>
            <person name="Gurjal M."/>
            <person name="Hansen N.F."/>
            <person name="Hayashizaki Y."/>
            <person name="Johnson-Hopson C."/>
            <person name="Hsuan V.W."/>
            <person name="Iida K."/>
            <person name="Karnes M."/>
            <person name="Khan S."/>
            <person name="Koesema E."/>
            <person name="Ishida J."/>
            <person name="Jiang P.X."/>
            <person name="Jones T."/>
            <person name="Kawai J."/>
            <person name="Kamiya A."/>
            <person name="Meyers C."/>
            <person name="Nakajima M."/>
            <person name="Narusaka M."/>
            <person name="Seki M."/>
            <person name="Sakurai T."/>
            <person name="Satou M."/>
            <person name="Tamse R."/>
            <person name="Vaysberg M."/>
            <person name="Wallender E.K."/>
            <person name="Wong C."/>
            <person name="Yamamura Y."/>
            <person name="Yuan S."/>
            <person name="Shinozaki K."/>
            <person name="Davis R.W."/>
            <person name="Theologis A."/>
            <person name="Ecker J.R."/>
        </authorList>
    </citation>
    <scope>NUCLEOTIDE SEQUENCE [LARGE SCALE MRNA]</scope>
    <source>
        <strain>cv. Columbia</strain>
    </source>
</reference>
<reference key="4">
    <citation type="submission" date="2006-07" db="EMBL/GenBank/DDBJ databases">
        <title>Large-scale analysis of RIKEN Arabidopsis full-length (RAFL) cDNAs.</title>
        <authorList>
            <person name="Totoki Y."/>
            <person name="Seki M."/>
            <person name="Ishida J."/>
            <person name="Nakajima M."/>
            <person name="Enju A."/>
            <person name="Kamiya A."/>
            <person name="Narusaka M."/>
            <person name="Shin-i T."/>
            <person name="Nakagawa M."/>
            <person name="Sakamoto N."/>
            <person name="Oishi K."/>
            <person name="Kohara Y."/>
            <person name="Kobayashi M."/>
            <person name="Toyoda A."/>
            <person name="Sakaki Y."/>
            <person name="Sakurai T."/>
            <person name="Iida K."/>
            <person name="Akiyama K."/>
            <person name="Satou M."/>
            <person name="Toyoda T."/>
            <person name="Konagaya A."/>
            <person name="Carninci P."/>
            <person name="Kawai J."/>
            <person name="Hayashizaki Y."/>
            <person name="Shinozaki K."/>
        </authorList>
    </citation>
    <scope>NUCLEOTIDE SEQUENCE [LARGE SCALE MRNA]</scope>
    <source>
        <strain>cv. Columbia</strain>
    </source>
</reference>
<reference key="5">
    <citation type="journal article" date="2019" name="Nat. Plants">
        <title>A SOSEKI-based coordinate system interprets global polarity cues in Arabidopsis.</title>
        <authorList>
            <person name="Yoshida S."/>
            <person name="van der Schuren A."/>
            <person name="van Dop M."/>
            <person name="van Galen L."/>
            <person name="Saiga S."/>
            <person name="Adibi M."/>
            <person name="Moeller B."/>
            <person name="Ten Hove C.A."/>
            <person name="Marhavy P."/>
            <person name="Smith R."/>
            <person name="Friml J."/>
            <person name="Weijers D."/>
        </authorList>
    </citation>
    <scope>FUNCTION</scope>
    <scope>SUBCELLULAR LOCATION</scope>
    <scope>DEVELOPMENTAL STAGE</scope>
    <scope>TISSUE SPECIFICITY</scope>
    <source>
        <strain>cv. Columbia</strain>
    </source>
</reference>
<reference key="6">
    <citation type="journal article" date="2020" name="Cell">
        <title>DIX domain polymerization drives assembly of plant cell polarity complexes.</title>
        <authorList>
            <person name="van Dop M."/>
            <person name="Fiedler M."/>
            <person name="Mutte S."/>
            <person name="de Keijzer J."/>
            <person name="Olijslager L."/>
            <person name="Albrecht C."/>
            <person name="Liao C.Y."/>
            <person name="Janson M.E."/>
            <person name="Bienz M."/>
            <person name="Weijers D."/>
        </authorList>
    </citation>
    <scope>MUTAGENESIS OF CYS-303 AND 356-GLU--GLU-359</scope>
    <scope>SUBUNIT</scope>
    <scope>GENE FAMILY</scope>
</reference>